<feature type="chain" id="PRO_1000146749" description="p-hydroxybenzoic acid efflux pump subunit AaeB">
    <location>
        <begin position="1"/>
        <end position="651"/>
    </location>
</feature>
<feature type="transmembrane region" description="Helical" evidence="1">
    <location>
        <begin position="11"/>
        <end position="31"/>
    </location>
</feature>
<feature type="transmembrane region" description="Helical" evidence="1">
    <location>
        <begin position="41"/>
        <end position="61"/>
    </location>
</feature>
<feature type="transmembrane region" description="Helical" evidence="1">
    <location>
        <begin position="67"/>
        <end position="87"/>
    </location>
</feature>
<feature type="transmembrane region" description="Helical" evidence="1">
    <location>
        <begin position="91"/>
        <end position="111"/>
    </location>
</feature>
<feature type="transmembrane region" description="Helical" evidence="1">
    <location>
        <begin position="119"/>
        <end position="139"/>
    </location>
</feature>
<feature type="transmembrane region" description="Helical" evidence="1">
    <location>
        <begin position="150"/>
        <end position="170"/>
    </location>
</feature>
<feature type="transmembrane region" description="Helical" evidence="1">
    <location>
        <begin position="368"/>
        <end position="388"/>
    </location>
</feature>
<feature type="transmembrane region" description="Helical" evidence="1">
    <location>
        <begin position="405"/>
        <end position="425"/>
    </location>
</feature>
<feature type="transmembrane region" description="Helical" evidence="1">
    <location>
        <begin position="429"/>
        <end position="449"/>
    </location>
</feature>
<feature type="transmembrane region" description="Helical" evidence="1">
    <location>
        <begin position="455"/>
        <end position="475"/>
    </location>
</feature>
<feature type="transmembrane region" description="Helical" evidence="1">
    <location>
        <begin position="481"/>
        <end position="501"/>
    </location>
</feature>
<sequence length="651" mass="72437">MTHPSFIRLRFAFKLSFAIVAALFLGFHLQLETPRWSVLTAAIVSAGPAFAAGGEPFSGAIRHRGWLRIIGTFIGCIGGLVIIVLTIRAPVLTLMLCCLWAGICTWISSLVRVENSYAFGLAGYTALIIIVTTGETPLLTPQFAVERCSEIVLGIVCAVMADLLFSPRSIKQDIDRLVDKVLVDQYRLLQLCIQPAEKSEIDRAWNELVKNTTSLNGMRSYLMMESSRWQRCNRRLQVLHTESLALITQACETYLVMSNHPEVISAELKTMLSEPAQTPAEIHQQMKKLRQFIAASHSEAIPHTISSWVGAATRYLLLSKGIQTNSSINQVEEDILAGDAPVKPISAEGHHAMINGLRTGIATAIGGLFWLWTGWTSGAGCMVMIAVVTSLAMRTPNPRRMALDFLVGVIIALPIGALYFMFIIPSTQQSMLLLCISLGVLAFIIGIEVQKRRLGSLGTLASTINIIVLSNPMIFNVRQFLDSALGQIVGCFVSLIVLLLIRDNAKDRTGRTLLNRFVYSAVSALTTNKTKRGENHLPALYQQLNQLLMMFPADIDKYRLALTLIIAHQRLNRTEIPVNAELSAFHKQIRSTAERVITVNNDQKRRYYFARLLQELDQYQQKLVDYQAADAVIRPVKRLTEMLRKYQSALI</sequence>
<dbReference type="EMBL" id="CP001048">
    <property type="protein sequence ID" value="ACC90685.1"/>
    <property type="molecule type" value="Genomic_DNA"/>
</dbReference>
<dbReference type="RefSeq" id="WP_002210095.1">
    <property type="nucleotide sequence ID" value="NZ_CP009780.1"/>
</dbReference>
<dbReference type="SMR" id="B2K436"/>
<dbReference type="GeneID" id="57975111"/>
<dbReference type="KEGG" id="ypb:YPTS_3732"/>
<dbReference type="PATRIC" id="fig|502801.10.peg.3190"/>
<dbReference type="GO" id="GO:0005886">
    <property type="term" value="C:plasma membrane"/>
    <property type="evidence" value="ECO:0007669"/>
    <property type="project" value="UniProtKB-SubCell"/>
</dbReference>
<dbReference type="GO" id="GO:0022857">
    <property type="term" value="F:transmembrane transporter activity"/>
    <property type="evidence" value="ECO:0007669"/>
    <property type="project" value="UniProtKB-UniRule"/>
</dbReference>
<dbReference type="GO" id="GO:0046942">
    <property type="term" value="P:carboxylic acid transport"/>
    <property type="evidence" value="ECO:0007669"/>
    <property type="project" value="InterPro"/>
</dbReference>
<dbReference type="HAMAP" id="MF_01545">
    <property type="entry name" value="AaeB"/>
    <property type="match status" value="1"/>
</dbReference>
<dbReference type="InterPro" id="IPR006726">
    <property type="entry name" value="PHBA_efflux_AaeB/fusaric-R"/>
</dbReference>
<dbReference type="InterPro" id="IPR023706">
    <property type="entry name" value="PHBA_efflux_pump_AaeB"/>
</dbReference>
<dbReference type="NCBIfam" id="NF007916">
    <property type="entry name" value="PRK10631.1"/>
    <property type="match status" value="1"/>
</dbReference>
<dbReference type="PANTHER" id="PTHR30509:SF9">
    <property type="entry name" value="MULTIDRUG RESISTANCE PROTEIN MDTO"/>
    <property type="match status" value="1"/>
</dbReference>
<dbReference type="PANTHER" id="PTHR30509">
    <property type="entry name" value="P-HYDROXYBENZOIC ACID EFFLUX PUMP SUBUNIT-RELATED"/>
    <property type="match status" value="1"/>
</dbReference>
<dbReference type="Pfam" id="PF04632">
    <property type="entry name" value="FUSC"/>
    <property type="match status" value="1"/>
</dbReference>
<reference key="1">
    <citation type="submission" date="2008-04" db="EMBL/GenBank/DDBJ databases">
        <title>Complete sequence of Yersinia pseudotuberculosis PB1/+.</title>
        <authorList>
            <person name="Copeland A."/>
            <person name="Lucas S."/>
            <person name="Lapidus A."/>
            <person name="Glavina del Rio T."/>
            <person name="Dalin E."/>
            <person name="Tice H."/>
            <person name="Bruce D."/>
            <person name="Goodwin L."/>
            <person name="Pitluck S."/>
            <person name="Munk A.C."/>
            <person name="Brettin T."/>
            <person name="Detter J.C."/>
            <person name="Han C."/>
            <person name="Tapia R."/>
            <person name="Schmutz J."/>
            <person name="Larimer F."/>
            <person name="Land M."/>
            <person name="Hauser L."/>
            <person name="Challacombe J.F."/>
            <person name="Green L."/>
            <person name="Lindler L.E."/>
            <person name="Nikolich M.P."/>
            <person name="Richardson P."/>
        </authorList>
    </citation>
    <scope>NUCLEOTIDE SEQUENCE [LARGE SCALE GENOMIC DNA]</scope>
    <source>
        <strain>PB1/+</strain>
    </source>
</reference>
<comment type="function">
    <text evidence="1">Forms an efflux pump with AaeA. Could function as a metabolic relief valve, allowing to eliminate certain compounds when they accumulate to high levels in the cell.</text>
</comment>
<comment type="subcellular location">
    <subcellularLocation>
        <location evidence="1">Cell inner membrane</location>
        <topology evidence="1">Multi-pass membrane protein</topology>
    </subcellularLocation>
</comment>
<comment type="similarity">
    <text evidence="1">Belongs to the aromatic acid exporter ArAE (TC 2.A.85) family.</text>
</comment>
<protein>
    <recommendedName>
        <fullName evidence="1">p-hydroxybenzoic acid efflux pump subunit AaeB</fullName>
        <shortName evidence="1">pHBA efflux pump protein B</shortName>
    </recommendedName>
</protein>
<keyword id="KW-0997">Cell inner membrane</keyword>
<keyword id="KW-1003">Cell membrane</keyword>
<keyword id="KW-0472">Membrane</keyword>
<keyword id="KW-0812">Transmembrane</keyword>
<keyword id="KW-1133">Transmembrane helix</keyword>
<keyword id="KW-0813">Transport</keyword>
<organism>
    <name type="scientific">Yersinia pseudotuberculosis serotype IB (strain PB1/+)</name>
    <dbReference type="NCBI Taxonomy" id="502801"/>
    <lineage>
        <taxon>Bacteria</taxon>
        <taxon>Pseudomonadati</taxon>
        <taxon>Pseudomonadota</taxon>
        <taxon>Gammaproteobacteria</taxon>
        <taxon>Enterobacterales</taxon>
        <taxon>Yersiniaceae</taxon>
        <taxon>Yersinia</taxon>
    </lineage>
</organism>
<name>AAEB_YERPB</name>
<accession>B2K436</accession>
<evidence type="ECO:0000255" key="1">
    <source>
        <dbReference type="HAMAP-Rule" id="MF_01545"/>
    </source>
</evidence>
<proteinExistence type="inferred from homology"/>
<gene>
    <name evidence="1" type="primary">aaeB</name>
    <name type="ordered locus">YPTS_3732</name>
</gene>